<proteinExistence type="inferred from homology"/>
<name>OPI10_ANOGA</name>
<reference key="1">
    <citation type="journal article" date="2002" name="Science">
        <title>The genome sequence of the malaria mosquito Anopheles gambiae.</title>
        <authorList>
            <person name="Holt R.A."/>
            <person name="Subramanian G.M."/>
            <person name="Halpern A."/>
            <person name="Sutton G.G."/>
            <person name="Charlab R."/>
            <person name="Nusskern D.R."/>
            <person name="Wincker P."/>
            <person name="Clark A.G."/>
            <person name="Ribeiro J.M.C."/>
            <person name="Wides R."/>
            <person name="Salzberg S.L."/>
            <person name="Loftus B.J."/>
            <person name="Yandell M.D."/>
            <person name="Majoros W.H."/>
            <person name="Rusch D.B."/>
            <person name="Lai Z."/>
            <person name="Kraft C.L."/>
            <person name="Abril J.F."/>
            <person name="Anthouard V."/>
            <person name="Arensburger P."/>
            <person name="Atkinson P.W."/>
            <person name="Baden H."/>
            <person name="de Berardinis V."/>
            <person name="Baldwin D."/>
            <person name="Benes V."/>
            <person name="Biedler J."/>
            <person name="Blass C."/>
            <person name="Bolanos R."/>
            <person name="Boscus D."/>
            <person name="Barnstead M."/>
            <person name="Cai S."/>
            <person name="Center A."/>
            <person name="Chaturverdi K."/>
            <person name="Christophides G.K."/>
            <person name="Chrystal M.A.M."/>
            <person name="Clamp M."/>
            <person name="Cravchik A."/>
            <person name="Curwen V."/>
            <person name="Dana A."/>
            <person name="Delcher A."/>
            <person name="Dew I."/>
            <person name="Evans C.A."/>
            <person name="Flanigan M."/>
            <person name="Grundschober-Freimoser A."/>
            <person name="Friedli L."/>
            <person name="Gu Z."/>
            <person name="Guan P."/>
            <person name="Guigo R."/>
            <person name="Hillenmeyer M.E."/>
            <person name="Hladun S.L."/>
            <person name="Hogan J.R."/>
            <person name="Hong Y.S."/>
            <person name="Hoover J."/>
            <person name="Jaillon O."/>
            <person name="Ke Z."/>
            <person name="Kodira C.D."/>
            <person name="Kokoza E."/>
            <person name="Koutsos A."/>
            <person name="Letunic I."/>
            <person name="Levitsky A.A."/>
            <person name="Liang Y."/>
            <person name="Lin J.-J."/>
            <person name="Lobo N.F."/>
            <person name="Lopez J.R."/>
            <person name="Malek J.A."/>
            <person name="McIntosh T.C."/>
            <person name="Meister S."/>
            <person name="Miller J.R."/>
            <person name="Mobarry C."/>
            <person name="Mongin E."/>
            <person name="Murphy S.D."/>
            <person name="O'Brochta D.A."/>
            <person name="Pfannkoch C."/>
            <person name="Qi R."/>
            <person name="Regier M.A."/>
            <person name="Remington K."/>
            <person name="Shao H."/>
            <person name="Sharakhova M.V."/>
            <person name="Sitter C.D."/>
            <person name="Shetty J."/>
            <person name="Smith T.J."/>
            <person name="Strong R."/>
            <person name="Sun J."/>
            <person name="Thomasova D."/>
            <person name="Ton L.Q."/>
            <person name="Topalis P."/>
            <person name="Tu Z.J."/>
            <person name="Unger M.F."/>
            <person name="Walenz B."/>
            <person name="Wang A.H."/>
            <person name="Wang J."/>
            <person name="Wang M."/>
            <person name="Wang X."/>
            <person name="Woodford K.J."/>
            <person name="Wortman J.R."/>
            <person name="Wu M."/>
            <person name="Yao A."/>
            <person name="Zdobnov E.M."/>
            <person name="Zhang H."/>
            <person name="Zhao Q."/>
            <person name="Zhao S."/>
            <person name="Zhu S.C."/>
            <person name="Zhimulev I."/>
            <person name="Coluzzi M."/>
            <person name="della Torre A."/>
            <person name="Roth C.W."/>
            <person name="Louis C."/>
            <person name="Kalush F."/>
            <person name="Mural R.J."/>
            <person name="Myers E.W."/>
            <person name="Adams M.D."/>
            <person name="Smith H.O."/>
            <person name="Broder S."/>
            <person name="Gardner M.J."/>
            <person name="Fraser C.M."/>
            <person name="Birney E."/>
            <person name="Bork P."/>
            <person name="Brey P.T."/>
            <person name="Venter J.C."/>
            <person name="Weissenbach J."/>
            <person name="Kafatos F.C."/>
            <person name="Collins F.H."/>
            <person name="Hoffman S.L."/>
        </authorList>
    </citation>
    <scope>NUCLEOTIDE SEQUENCE [LARGE SCALE GENOMIC DNA]</scope>
    <source>
        <strain>PEST</strain>
    </source>
</reference>
<dbReference type="EMBL" id="AAAB01008859">
    <property type="protein sequence ID" value="EAA07533.4"/>
    <property type="molecule type" value="Genomic_DNA"/>
</dbReference>
<dbReference type="SMR" id="Q7PRB5"/>
<dbReference type="FunCoup" id="Q7PRB5">
    <property type="interactions" value="1937"/>
</dbReference>
<dbReference type="STRING" id="7165.Q7PRB5"/>
<dbReference type="PaxDb" id="7165-AGAP002426-PA"/>
<dbReference type="EnsemblMetazoa" id="AGAP002426-RA">
    <property type="protein sequence ID" value="AGAP002426-PA"/>
    <property type="gene ID" value="AGAP002426"/>
</dbReference>
<dbReference type="GeneID" id="1273534"/>
<dbReference type="KEGG" id="aga:1273534"/>
<dbReference type="VEuPathDB" id="VectorBase:AGAMI1_012750"/>
<dbReference type="VEuPathDB" id="VectorBase:AGAP002426"/>
<dbReference type="eggNOG" id="KOG4067">
    <property type="taxonomic scope" value="Eukaryota"/>
</dbReference>
<dbReference type="HOGENOM" id="CLU_084839_0_0_1"/>
<dbReference type="InParanoid" id="Q7PRB5"/>
<dbReference type="OMA" id="WWAKFER"/>
<dbReference type="OrthoDB" id="10248398at2759"/>
<dbReference type="PhylomeDB" id="Q7PRB5"/>
<dbReference type="Proteomes" id="UP000007062">
    <property type="component" value="Chromosome 2R"/>
</dbReference>
<dbReference type="GO" id="GO:0005829">
    <property type="term" value="C:cytosol"/>
    <property type="evidence" value="ECO:0000318"/>
    <property type="project" value="GO_Central"/>
</dbReference>
<dbReference type="GO" id="GO:0005634">
    <property type="term" value="C:nucleus"/>
    <property type="evidence" value="ECO:0000318"/>
    <property type="project" value="GO_Central"/>
</dbReference>
<dbReference type="GO" id="GO:0030544">
    <property type="term" value="F:Hsp70 protein binding"/>
    <property type="evidence" value="ECO:0000318"/>
    <property type="project" value="GO_Central"/>
</dbReference>
<dbReference type="GO" id="GO:0061608">
    <property type="term" value="F:nuclear import signal receptor activity"/>
    <property type="evidence" value="ECO:0000318"/>
    <property type="project" value="GO_Central"/>
</dbReference>
<dbReference type="GO" id="GO:0006606">
    <property type="term" value="P:protein import into nucleus"/>
    <property type="evidence" value="ECO:0000318"/>
    <property type="project" value="GO_Central"/>
</dbReference>
<dbReference type="InterPro" id="IPR048364">
    <property type="entry name" value="Hikeshi-like_C"/>
</dbReference>
<dbReference type="InterPro" id="IPR008493">
    <property type="entry name" value="Hikeshi-like_N"/>
</dbReference>
<dbReference type="InterPro" id="IPR031318">
    <property type="entry name" value="OPI10"/>
</dbReference>
<dbReference type="PANTHER" id="PTHR12925">
    <property type="entry name" value="HIKESHI FAMILY MEMBER"/>
    <property type="match status" value="1"/>
</dbReference>
<dbReference type="PANTHER" id="PTHR12925:SF0">
    <property type="entry name" value="PROTEIN HIKESHI"/>
    <property type="match status" value="1"/>
</dbReference>
<dbReference type="Pfam" id="PF21057">
    <property type="entry name" value="Hikeshi-like_C"/>
    <property type="match status" value="1"/>
</dbReference>
<dbReference type="Pfam" id="PF05603">
    <property type="entry name" value="Hikeshi-like_N"/>
    <property type="match status" value="1"/>
</dbReference>
<keyword id="KW-1185">Reference proteome</keyword>
<feature type="chain" id="PRO_0000328390" description="Protein OPI10 homolog">
    <location>
        <begin position="1"/>
        <end position="201"/>
    </location>
</feature>
<accession>Q7PRB5</accession>
<evidence type="ECO:0000305" key="1"/>
<gene>
    <name type="ORF">AGAP002426</name>
</gene>
<organism>
    <name type="scientific">Anopheles gambiae</name>
    <name type="common">African malaria mosquito</name>
    <dbReference type="NCBI Taxonomy" id="7165"/>
    <lineage>
        <taxon>Eukaryota</taxon>
        <taxon>Metazoa</taxon>
        <taxon>Ecdysozoa</taxon>
        <taxon>Arthropoda</taxon>
        <taxon>Hexapoda</taxon>
        <taxon>Insecta</taxon>
        <taxon>Pterygota</taxon>
        <taxon>Neoptera</taxon>
        <taxon>Endopterygota</taxon>
        <taxon>Diptera</taxon>
        <taxon>Nematocera</taxon>
        <taxon>Culicoidea</taxon>
        <taxon>Culicidae</taxon>
        <taxon>Anophelinae</taxon>
        <taxon>Anopheles</taxon>
    </lineage>
</organism>
<comment type="similarity">
    <text evidence="1">Belongs to the OPI10 family.</text>
</comment>
<sequence>MLNALGVIVSGRLVQTDFQQISDSHFLITIPDADNVNHVVVFLTGTTPFPDGMAGGVYFSWPDPNAPPNWQLLGYISNTKPSAIFKISQLKKLDEIAGQSTMMNNVFGSNLPISHIAQIGVSIEPESSLVQQTPSTTTSSTYYQFGQKIVENFFNFVSSFSITQSQMTPAPNETFVPLSTVQTWYTNFERRLQQNPNFWKN</sequence>
<protein>
    <recommendedName>
        <fullName>Protein OPI10 homolog</fullName>
    </recommendedName>
</protein>